<keyword id="KW-0413">Isomerase</keyword>
<keyword id="KW-0423">Lactose metabolism</keyword>
<keyword id="KW-1185">Reference proteome</keyword>
<comment type="catalytic activity">
    <reaction evidence="1">
        <text>aldehydo-D-galactose 6-phosphate = keto-D-tagatose 6-phosphate</text>
        <dbReference type="Rhea" id="RHEA:13033"/>
        <dbReference type="ChEBI" id="CHEBI:58255"/>
        <dbReference type="ChEBI" id="CHEBI:134283"/>
        <dbReference type="EC" id="5.3.1.26"/>
    </reaction>
</comment>
<comment type="pathway">
    <text evidence="1">Carbohydrate metabolism; D-galactose 6-phosphate degradation; D-tagatose 6-phosphate from D-galactose 6-phosphate: step 1/1.</text>
</comment>
<comment type="subunit">
    <text evidence="1">Heteromultimeric protein consisting of LacA and LacB.</text>
</comment>
<comment type="similarity">
    <text evidence="1">Belongs to the LacAB/RpiB family.</text>
</comment>
<sequence length="142" mass="15608">MAIIIGSDAAGKRLKDVIKTFLKDNNHEVLDVTERKDLDFVDSTLAVVHEVQKNDKNLGIAIDAYGAGSFMVATKVKGMIAAEVSDERSAYMTRGHNNARIITLGAEIVGDELAKNIVKDFVEAKYDGGRHQIRVDMLNKMC</sequence>
<accession>P26423</accession>
<protein>
    <recommendedName>
        <fullName evidence="1">Galactose-6-phosphate isomerase subunit LacA</fullName>
        <ecNumber evidence="1">5.3.1.26</ecNumber>
    </recommendedName>
</protein>
<gene>
    <name evidence="1" type="primary">lacA</name>
    <name type="ordered locus">SMU_1496</name>
</gene>
<reference key="1">
    <citation type="journal article" date="1992" name="J. Bacteriol.">
        <title>Nucleotide and deduced amino acid sequences of the lacR, lacABCD, and lacFE genes encoding the repressor, tagatose 6-phosphate gene cluster, and sugar-specific phosphotransferase system components of the lactose operon of Streptococcus mutans.</title>
        <authorList>
            <person name="Rosey E.L."/>
            <person name="Stewart G.C."/>
        </authorList>
    </citation>
    <scope>NUCLEOTIDE SEQUENCE [GENOMIC DNA]</scope>
</reference>
<reference key="2">
    <citation type="journal article" date="2002" name="Proc. Natl. Acad. Sci. U.S.A.">
        <title>Genome sequence of Streptococcus mutans UA159, a cariogenic dental pathogen.</title>
        <authorList>
            <person name="Ajdic D.J."/>
            <person name="McShan W.M."/>
            <person name="McLaughlin R.E."/>
            <person name="Savic G."/>
            <person name="Chang J."/>
            <person name="Carson M.B."/>
            <person name="Primeaux C."/>
            <person name="Tian R."/>
            <person name="Kenton S."/>
            <person name="Jia H.G."/>
            <person name="Lin S.P."/>
            <person name="Qian Y."/>
            <person name="Li S."/>
            <person name="Zhu H."/>
            <person name="Najar F.Z."/>
            <person name="Lai H."/>
            <person name="White J."/>
            <person name="Roe B.A."/>
            <person name="Ferretti J.J."/>
        </authorList>
    </citation>
    <scope>NUCLEOTIDE SEQUENCE [LARGE SCALE GENOMIC DNA]</scope>
    <source>
        <strain>ATCC 700610 / UA159</strain>
    </source>
</reference>
<dbReference type="EC" id="5.3.1.26" evidence="1"/>
<dbReference type="EMBL" id="M80797">
    <property type="protein sequence ID" value="AAA26904.1"/>
    <property type="molecule type" value="Genomic_DNA"/>
</dbReference>
<dbReference type="EMBL" id="AE014133">
    <property type="protein sequence ID" value="AAN59150.1"/>
    <property type="molecule type" value="Genomic_DNA"/>
</dbReference>
<dbReference type="PIR" id="C43258">
    <property type="entry name" value="C43258"/>
</dbReference>
<dbReference type="RefSeq" id="NP_721844.1">
    <property type="nucleotide sequence ID" value="NC_004350.2"/>
</dbReference>
<dbReference type="RefSeq" id="WP_002262463.1">
    <property type="nucleotide sequence ID" value="NC_004350.2"/>
</dbReference>
<dbReference type="SMR" id="P26423"/>
<dbReference type="STRING" id="210007.SMU_1496"/>
<dbReference type="GeneID" id="93859067"/>
<dbReference type="KEGG" id="smu:SMU_1496"/>
<dbReference type="PATRIC" id="fig|210007.7.peg.1332"/>
<dbReference type="eggNOG" id="COG0698">
    <property type="taxonomic scope" value="Bacteria"/>
</dbReference>
<dbReference type="HOGENOM" id="CLU_091396_4_2_9"/>
<dbReference type="OrthoDB" id="1778624at2"/>
<dbReference type="PhylomeDB" id="P26423"/>
<dbReference type="UniPathway" id="UPA00702">
    <property type="reaction ID" value="UER00714"/>
</dbReference>
<dbReference type="Proteomes" id="UP000002512">
    <property type="component" value="Chromosome"/>
</dbReference>
<dbReference type="GO" id="GO:0050044">
    <property type="term" value="F:galactose-6-phosphate isomerase activity"/>
    <property type="evidence" value="ECO:0007669"/>
    <property type="project" value="UniProtKB-UniRule"/>
</dbReference>
<dbReference type="GO" id="GO:0004751">
    <property type="term" value="F:ribose-5-phosphate isomerase activity"/>
    <property type="evidence" value="ECO:0007669"/>
    <property type="project" value="TreeGrafter"/>
</dbReference>
<dbReference type="GO" id="GO:0019316">
    <property type="term" value="P:D-allose catabolic process"/>
    <property type="evidence" value="ECO:0007669"/>
    <property type="project" value="TreeGrafter"/>
</dbReference>
<dbReference type="GO" id="GO:0019388">
    <property type="term" value="P:galactose catabolic process"/>
    <property type="evidence" value="ECO:0007669"/>
    <property type="project" value="UniProtKB-UniPathway"/>
</dbReference>
<dbReference type="GO" id="GO:0019512">
    <property type="term" value="P:lactose catabolic process via tagatose-6-phosphate"/>
    <property type="evidence" value="ECO:0007669"/>
    <property type="project" value="UniProtKB-UniRule"/>
</dbReference>
<dbReference type="GO" id="GO:0009052">
    <property type="term" value="P:pentose-phosphate shunt, non-oxidative branch"/>
    <property type="evidence" value="ECO:0007669"/>
    <property type="project" value="TreeGrafter"/>
</dbReference>
<dbReference type="Gene3D" id="3.40.1400.10">
    <property type="entry name" value="Sugar-phosphate isomerase, RpiB/LacA/LacB"/>
    <property type="match status" value="1"/>
</dbReference>
<dbReference type="HAMAP" id="MF_01555">
    <property type="entry name" value="LacA"/>
    <property type="match status" value="1"/>
</dbReference>
<dbReference type="InterPro" id="IPR004783">
    <property type="entry name" value="LacA"/>
</dbReference>
<dbReference type="InterPro" id="IPR003500">
    <property type="entry name" value="RpiB_LacA_LacB"/>
</dbReference>
<dbReference type="InterPro" id="IPR036569">
    <property type="entry name" value="RpiB_LacA_LacB_sf"/>
</dbReference>
<dbReference type="NCBIfam" id="TIGR01118">
    <property type="entry name" value="lacA"/>
    <property type="match status" value="1"/>
</dbReference>
<dbReference type="NCBIfam" id="NF006380">
    <property type="entry name" value="PRK08621.1"/>
    <property type="match status" value="1"/>
</dbReference>
<dbReference type="NCBIfam" id="TIGR00689">
    <property type="entry name" value="rpiB_lacA_lacB"/>
    <property type="match status" value="1"/>
</dbReference>
<dbReference type="PANTHER" id="PTHR30345:SF5">
    <property type="entry name" value="GALACTOSE-6-PHOSPHATE ISOMERASE SUBUNIT LACA"/>
    <property type="match status" value="1"/>
</dbReference>
<dbReference type="PANTHER" id="PTHR30345">
    <property type="entry name" value="RIBOSE-5-PHOSPHATE ISOMERASE B"/>
    <property type="match status" value="1"/>
</dbReference>
<dbReference type="Pfam" id="PF02502">
    <property type="entry name" value="LacAB_rpiB"/>
    <property type="match status" value="1"/>
</dbReference>
<dbReference type="PIRSF" id="PIRSF005384">
    <property type="entry name" value="RpiB_LacA_B"/>
    <property type="match status" value="1"/>
</dbReference>
<dbReference type="SUPFAM" id="SSF89623">
    <property type="entry name" value="Ribose/Galactose isomerase RpiB/AlsB"/>
    <property type="match status" value="1"/>
</dbReference>
<evidence type="ECO:0000255" key="1">
    <source>
        <dbReference type="HAMAP-Rule" id="MF_01555"/>
    </source>
</evidence>
<organism>
    <name type="scientific">Streptococcus mutans serotype c (strain ATCC 700610 / UA159)</name>
    <dbReference type="NCBI Taxonomy" id="210007"/>
    <lineage>
        <taxon>Bacteria</taxon>
        <taxon>Bacillati</taxon>
        <taxon>Bacillota</taxon>
        <taxon>Bacilli</taxon>
        <taxon>Lactobacillales</taxon>
        <taxon>Streptococcaceae</taxon>
        <taxon>Streptococcus</taxon>
    </lineage>
</organism>
<feature type="chain" id="PRO_0000208119" description="Galactose-6-phosphate isomerase subunit LacA">
    <location>
        <begin position="1"/>
        <end position="142"/>
    </location>
</feature>
<proteinExistence type="inferred from homology"/>
<name>LACA_STRMU</name>